<keyword id="KW-0143">Chaperone</keyword>
<keyword id="KW-0963">Cytoplasm</keyword>
<keyword id="KW-1015">Disulfide bond</keyword>
<keyword id="KW-0676">Redox-active center</keyword>
<keyword id="KW-0862">Zinc</keyword>
<gene>
    <name evidence="1" type="primary">hslO</name>
    <name type="ordered locus">YPN_3926</name>
    <name type="ORF">YP516_4456</name>
</gene>
<evidence type="ECO:0000255" key="1">
    <source>
        <dbReference type="HAMAP-Rule" id="MF_00117"/>
    </source>
</evidence>
<accession>Q1CCM7</accession>
<accession>D1Q2U3</accession>
<reference key="1">
    <citation type="journal article" date="2006" name="J. Bacteriol.">
        <title>Complete genome sequence of Yersinia pestis strains Antiqua and Nepal516: evidence of gene reduction in an emerging pathogen.</title>
        <authorList>
            <person name="Chain P.S.G."/>
            <person name="Hu P."/>
            <person name="Malfatti S.A."/>
            <person name="Radnedge L."/>
            <person name="Larimer F."/>
            <person name="Vergez L.M."/>
            <person name="Worsham P."/>
            <person name="Chu M.C."/>
            <person name="Andersen G.L."/>
        </authorList>
    </citation>
    <scope>NUCLEOTIDE SEQUENCE [LARGE SCALE GENOMIC DNA]</scope>
    <source>
        <strain>Nepal516</strain>
    </source>
</reference>
<reference key="2">
    <citation type="submission" date="2009-04" db="EMBL/GenBank/DDBJ databases">
        <title>Yersinia pestis Nepal516A whole genome shotgun sequencing project.</title>
        <authorList>
            <person name="Plunkett G. III"/>
            <person name="Anderson B.D."/>
            <person name="Baumler D.J."/>
            <person name="Burland V."/>
            <person name="Cabot E.L."/>
            <person name="Glasner J.D."/>
            <person name="Mau B."/>
            <person name="Neeno-Eckwall E."/>
            <person name="Perna N.T."/>
            <person name="Munk A.C."/>
            <person name="Tapia R."/>
            <person name="Green L.D."/>
            <person name="Rogers Y.C."/>
            <person name="Detter J.C."/>
            <person name="Bruce D.C."/>
            <person name="Brettin T.S."/>
        </authorList>
    </citation>
    <scope>NUCLEOTIDE SEQUENCE [LARGE SCALE GENOMIC DNA]</scope>
    <source>
        <strain>Nepal516</strain>
    </source>
</reference>
<protein>
    <recommendedName>
        <fullName evidence="1">33 kDa chaperonin</fullName>
    </recommendedName>
    <alternativeName>
        <fullName evidence="1">Heat shock protein 33 homolog</fullName>
        <shortName evidence="1">HSP33</shortName>
    </alternativeName>
</protein>
<name>HSLO_YERPN</name>
<proteinExistence type="inferred from homology"/>
<sequence>MSNHDQLHRYLFANHAVRGELVSVNETYQQVLANHDYPPAVQKLLGEMLVATSLLTATLKFDGDITVQLQGGDGPLTLAVINGNNRQEMRGVARVKGEISDDSTLQEMVGNGYLVITITPAQGERYQGVVALEGETIAACLENYFMQSEQLPTRLFIRTGHVADKAAAGGMLLQVLPAQERNEDEFDHLAQLTATIKAEELFTLPANEVLYRLYHQEEVTLYEPQNVSFRCTCSRQRCADALVTLADDDVTEMLEQDGNIDMHCEYCGNHYLFDAVDIATLKNGNSASSEQIH</sequence>
<comment type="function">
    <text evidence="1">Redox regulated molecular chaperone. Protects both thermally unfolding and oxidatively damaged proteins from irreversible aggregation. Plays an important role in the bacterial defense system toward oxidative stress.</text>
</comment>
<comment type="subcellular location">
    <subcellularLocation>
        <location evidence="1">Cytoplasm</location>
    </subcellularLocation>
</comment>
<comment type="PTM">
    <text evidence="1">Under oxidizing conditions two disulfide bonds are formed involving the reactive cysteines. Under reducing conditions zinc is bound to the reactive cysteines and the protein is inactive.</text>
</comment>
<comment type="similarity">
    <text evidence="1">Belongs to the HSP33 family.</text>
</comment>
<dbReference type="EMBL" id="CP000305">
    <property type="protein sequence ID" value="ABG20253.1"/>
    <property type="molecule type" value="Genomic_DNA"/>
</dbReference>
<dbReference type="EMBL" id="ACNQ01000019">
    <property type="protein sequence ID" value="EEO74846.1"/>
    <property type="molecule type" value="Genomic_DNA"/>
</dbReference>
<dbReference type="RefSeq" id="WP_002208911.1">
    <property type="nucleotide sequence ID" value="NZ_ACNQ01000019.1"/>
</dbReference>
<dbReference type="SMR" id="Q1CCM7"/>
<dbReference type="GeneID" id="57974461"/>
<dbReference type="KEGG" id="ypn:YPN_3926"/>
<dbReference type="HOGENOM" id="CLU_054493_0_0_6"/>
<dbReference type="Proteomes" id="UP000008936">
    <property type="component" value="Chromosome"/>
</dbReference>
<dbReference type="GO" id="GO:0005737">
    <property type="term" value="C:cytoplasm"/>
    <property type="evidence" value="ECO:0007669"/>
    <property type="project" value="UniProtKB-SubCell"/>
</dbReference>
<dbReference type="GO" id="GO:0044183">
    <property type="term" value="F:protein folding chaperone"/>
    <property type="evidence" value="ECO:0007669"/>
    <property type="project" value="TreeGrafter"/>
</dbReference>
<dbReference type="GO" id="GO:0051082">
    <property type="term" value="F:unfolded protein binding"/>
    <property type="evidence" value="ECO:0007669"/>
    <property type="project" value="UniProtKB-UniRule"/>
</dbReference>
<dbReference type="GO" id="GO:0042026">
    <property type="term" value="P:protein refolding"/>
    <property type="evidence" value="ECO:0007669"/>
    <property type="project" value="TreeGrafter"/>
</dbReference>
<dbReference type="CDD" id="cd00498">
    <property type="entry name" value="Hsp33"/>
    <property type="match status" value="1"/>
</dbReference>
<dbReference type="Gene3D" id="1.10.287.480">
    <property type="entry name" value="helix hairpin bin"/>
    <property type="match status" value="1"/>
</dbReference>
<dbReference type="Gene3D" id="3.55.30.10">
    <property type="entry name" value="Hsp33 domain"/>
    <property type="match status" value="1"/>
</dbReference>
<dbReference type="Gene3D" id="3.90.1280.10">
    <property type="entry name" value="HSP33 redox switch-like"/>
    <property type="match status" value="1"/>
</dbReference>
<dbReference type="HAMAP" id="MF_00117">
    <property type="entry name" value="HslO"/>
    <property type="match status" value="1"/>
</dbReference>
<dbReference type="InterPro" id="IPR000397">
    <property type="entry name" value="Heat_shock_Hsp33"/>
</dbReference>
<dbReference type="InterPro" id="IPR016154">
    <property type="entry name" value="Heat_shock_Hsp33_C"/>
</dbReference>
<dbReference type="InterPro" id="IPR016153">
    <property type="entry name" value="Heat_shock_Hsp33_N"/>
</dbReference>
<dbReference type="InterPro" id="IPR023212">
    <property type="entry name" value="Hsp33_helix_hairpin_bin_dom_sf"/>
</dbReference>
<dbReference type="NCBIfam" id="NF001033">
    <property type="entry name" value="PRK00114.1"/>
    <property type="match status" value="1"/>
</dbReference>
<dbReference type="PANTHER" id="PTHR30111">
    <property type="entry name" value="33 KDA CHAPERONIN"/>
    <property type="match status" value="1"/>
</dbReference>
<dbReference type="PANTHER" id="PTHR30111:SF1">
    <property type="entry name" value="33 KDA CHAPERONIN"/>
    <property type="match status" value="1"/>
</dbReference>
<dbReference type="Pfam" id="PF01430">
    <property type="entry name" value="HSP33"/>
    <property type="match status" value="1"/>
</dbReference>
<dbReference type="PIRSF" id="PIRSF005261">
    <property type="entry name" value="Heat_shock_Hsp33"/>
    <property type="match status" value="1"/>
</dbReference>
<dbReference type="SUPFAM" id="SSF64397">
    <property type="entry name" value="Hsp33 domain"/>
    <property type="match status" value="1"/>
</dbReference>
<dbReference type="SUPFAM" id="SSF118352">
    <property type="entry name" value="HSP33 redox switch-like"/>
    <property type="match status" value="1"/>
</dbReference>
<organism>
    <name type="scientific">Yersinia pestis bv. Antiqua (strain Nepal516)</name>
    <dbReference type="NCBI Taxonomy" id="377628"/>
    <lineage>
        <taxon>Bacteria</taxon>
        <taxon>Pseudomonadati</taxon>
        <taxon>Pseudomonadota</taxon>
        <taxon>Gammaproteobacteria</taxon>
        <taxon>Enterobacterales</taxon>
        <taxon>Yersiniaceae</taxon>
        <taxon>Yersinia</taxon>
    </lineage>
</organism>
<feature type="chain" id="PRO_1000015595" description="33 kDa chaperonin">
    <location>
        <begin position="1"/>
        <end position="293"/>
    </location>
</feature>
<feature type="disulfide bond" description="Redox-active" evidence="1">
    <location>
        <begin position="231"/>
        <end position="233"/>
    </location>
</feature>
<feature type="disulfide bond" description="Redox-active" evidence="1">
    <location>
        <begin position="264"/>
        <end position="267"/>
    </location>
</feature>